<keyword id="KW-0067">ATP-binding</keyword>
<keyword id="KW-0418">Kinase</keyword>
<keyword id="KW-0547">Nucleotide-binding</keyword>
<keyword id="KW-0808">Transferase</keyword>
<proteinExistence type="evidence at transcript level"/>
<reference key="1">
    <citation type="journal article" date="1997" name="Biochim. Biophys. Acta">
        <title>Evolution of phosphagen kinase V. cDNA-derived amino acid sequences of two molluscan arginine kinases from the chiton Liolophura japonica and the turbanshell Battilus cornutus.</title>
        <authorList>
            <person name="Suzuki T."/>
            <person name="Ban T."/>
            <person name="Furukohri T."/>
        </authorList>
    </citation>
    <scope>NUCLEOTIDE SEQUENCE [MRNA]</scope>
</reference>
<name>KARG_LIOJA</name>
<accession>O15990</accession>
<sequence>MADLAELWEKVSSNKDSKSLLKKHLTKEVYEKLKDKKTKFGGTLADCIRSGAKNLDSGVGVYASDPEAYTVFQDLLGPVILDYHKITELKHPACDFGDLSNLGFGDFDPSGDWIVSTRVRVGRSHASFGFPPTLNKEQRVEMQRVTQGALEGLTGELKGKYYPLEGMTPDVQKQLTEDHFLFNDSDRFLKAASGYDDWPTGRGIFFNDNKTFLVWVNEEDHIRIISMQKGGDLAAVYKRLVGGIKELEKKLEFARLPNLGYLTFCPSNLGTTLRASVHIKIPKVAKKPEFKEICDKLNLQARGIHGEHTESVGGVYDISNKRRMGLSEIEAIQEMRKGVEEIIKLEKAA</sequence>
<protein>
    <recommendedName>
        <fullName>Arginine kinase</fullName>
        <shortName>AK</shortName>
        <ecNumber>2.7.3.3</ecNumber>
    </recommendedName>
</protein>
<organism>
    <name type="scientific">Liolophura japonica</name>
    <name type="common">Chiton</name>
    <name type="synonym">Acanthopleura japonica</name>
    <dbReference type="NCBI Taxonomy" id="13599"/>
    <lineage>
        <taxon>Eukaryota</taxon>
        <taxon>Metazoa</taxon>
        <taxon>Spiralia</taxon>
        <taxon>Lophotrochozoa</taxon>
        <taxon>Mollusca</taxon>
        <taxon>Polyplacophora</taxon>
        <taxon>Neoloricata</taxon>
        <taxon>Chitonida</taxon>
        <taxon>Chitonina</taxon>
        <taxon>Chitonidae</taxon>
        <taxon>Acanthopleurinae</taxon>
        <taxon>Liolophura</taxon>
    </lineage>
</organism>
<comment type="catalytic activity">
    <reaction>
        <text>L-arginine + ATP = N(omega)-phospho-L-arginine + ADP + H(+)</text>
        <dbReference type="Rhea" id="RHEA:22940"/>
        <dbReference type="ChEBI" id="CHEBI:15378"/>
        <dbReference type="ChEBI" id="CHEBI:30616"/>
        <dbReference type="ChEBI" id="CHEBI:32682"/>
        <dbReference type="ChEBI" id="CHEBI:58477"/>
        <dbReference type="ChEBI" id="CHEBI:456216"/>
        <dbReference type="EC" id="2.7.3.3"/>
    </reaction>
</comment>
<comment type="similarity">
    <text evidence="2 3">Belongs to the ATP:guanido phosphotransferase family.</text>
</comment>
<dbReference type="EC" id="2.7.3.3"/>
<dbReference type="EMBL" id="AB008012">
    <property type="protein sequence ID" value="BAA22871.1"/>
    <property type="molecule type" value="mRNA"/>
</dbReference>
<dbReference type="SMR" id="O15990"/>
<dbReference type="GO" id="GO:0005615">
    <property type="term" value="C:extracellular space"/>
    <property type="evidence" value="ECO:0007669"/>
    <property type="project" value="TreeGrafter"/>
</dbReference>
<dbReference type="GO" id="GO:0004054">
    <property type="term" value="F:arginine kinase activity"/>
    <property type="evidence" value="ECO:0007669"/>
    <property type="project" value="UniProtKB-EC"/>
</dbReference>
<dbReference type="GO" id="GO:0005524">
    <property type="term" value="F:ATP binding"/>
    <property type="evidence" value="ECO:0007669"/>
    <property type="project" value="UniProtKB-KW"/>
</dbReference>
<dbReference type="GO" id="GO:0004111">
    <property type="term" value="F:creatine kinase activity"/>
    <property type="evidence" value="ECO:0007669"/>
    <property type="project" value="InterPro"/>
</dbReference>
<dbReference type="GO" id="GO:0046314">
    <property type="term" value="P:phosphocreatine biosynthetic process"/>
    <property type="evidence" value="ECO:0007669"/>
    <property type="project" value="InterPro"/>
</dbReference>
<dbReference type="CDD" id="cd07932">
    <property type="entry name" value="arginine_kinase_like"/>
    <property type="match status" value="1"/>
</dbReference>
<dbReference type="FunFam" id="3.30.590.10:FF:000006">
    <property type="entry name" value="Arginine kinase 1"/>
    <property type="match status" value="1"/>
</dbReference>
<dbReference type="FunFam" id="1.10.135.10:FF:000003">
    <property type="entry name" value="Three-domain arginine kinase"/>
    <property type="match status" value="1"/>
</dbReference>
<dbReference type="Gene3D" id="1.10.135.10">
    <property type="entry name" value="ATP:guanido phosphotransferase, N-terminal domain"/>
    <property type="match status" value="1"/>
</dbReference>
<dbReference type="Gene3D" id="3.30.590.10">
    <property type="entry name" value="Glutamine synthetase/guanido kinase, catalytic domain"/>
    <property type="match status" value="1"/>
</dbReference>
<dbReference type="InterPro" id="IPR000749">
    <property type="entry name" value="ATP-guanido_PTrfase"/>
</dbReference>
<dbReference type="InterPro" id="IPR022415">
    <property type="entry name" value="ATP-guanido_PTrfase_AS"/>
</dbReference>
<dbReference type="InterPro" id="IPR022414">
    <property type="entry name" value="ATP-guanido_PTrfase_cat"/>
</dbReference>
<dbReference type="InterPro" id="IPR022413">
    <property type="entry name" value="ATP-guanido_PTrfase_N"/>
</dbReference>
<dbReference type="InterPro" id="IPR036802">
    <property type="entry name" value="ATP-guanido_PTrfase_N_sf"/>
</dbReference>
<dbReference type="InterPro" id="IPR014746">
    <property type="entry name" value="Gln_synth/guanido_kin_cat_dom"/>
</dbReference>
<dbReference type="PANTHER" id="PTHR11547:SF38">
    <property type="entry name" value="ARGININE KINASE 1-RELATED"/>
    <property type="match status" value="1"/>
</dbReference>
<dbReference type="PANTHER" id="PTHR11547">
    <property type="entry name" value="ARGININE OR CREATINE KINASE"/>
    <property type="match status" value="1"/>
</dbReference>
<dbReference type="Pfam" id="PF00217">
    <property type="entry name" value="ATP-gua_Ptrans"/>
    <property type="match status" value="1"/>
</dbReference>
<dbReference type="Pfam" id="PF02807">
    <property type="entry name" value="ATP-gua_PtransN"/>
    <property type="match status" value="1"/>
</dbReference>
<dbReference type="SUPFAM" id="SSF55931">
    <property type="entry name" value="Glutamine synthetase/guanido kinase"/>
    <property type="match status" value="1"/>
</dbReference>
<dbReference type="SUPFAM" id="SSF48034">
    <property type="entry name" value="Guanido kinase N-terminal domain"/>
    <property type="match status" value="1"/>
</dbReference>
<dbReference type="PROSITE" id="PS00112">
    <property type="entry name" value="PHOSPHAGEN_KINASE"/>
    <property type="match status" value="1"/>
</dbReference>
<dbReference type="PROSITE" id="PS51510">
    <property type="entry name" value="PHOSPHAGEN_KINASE_C"/>
    <property type="match status" value="1"/>
</dbReference>
<dbReference type="PROSITE" id="PS51509">
    <property type="entry name" value="PHOSPHAGEN_KINASE_N"/>
    <property type="match status" value="1"/>
</dbReference>
<feature type="chain" id="PRO_0000212001" description="Arginine kinase">
    <location>
        <begin position="1"/>
        <end position="349"/>
    </location>
</feature>
<feature type="domain" description="Phosphagen kinase N-terminal" evidence="2">
    <location>
        <begin position="3"/>
        <end position="85"/>
    </location>
</feature>
<feature type="domain" description="Phosphagen kinase C-terminal" evidence="3">
    <location>
        <begin position="113"/>
        <end position="349"/>
    </location>
</feature>
<feature type="binding site" evidence="1">
    <location>
        <begin position="58"/>
        <end position="62"/>
    </location>
    <ligand>
        <name>substrate</name>
    </ligand>
</feature>
<feature type="binding site" evidence="3">
    <location>
        <begin position="116"/>
        <end position="120"/>
    </location>
    <ligand>
        <name>ATP</name>
        <dbReference type="ChEBI" id="CHEBI:30616"/>
    </ligand>
</feature>
<feature type="binding site" evidence="3">
    <location>
        <position position="179"/>
    </location>
    <ligand>
        <name>ATP</name>
        <dbReference type="ChEBI" id="CHEBI:30616"/>
    </ligand>
</feature>
<feature type="binding site" evidence="1">
    <location>
        <position position="219"/>
    </location>
    <ligand>
        <name>substrate</name>
    </ligand>
</feature>
<feature type="binding site" evidence="3">
    <location>
        <position position="223"/>
    </location>
    <ligand>
        <name>ATP</name>
        <dbReference type="ChEBI" id="CHEBI:30616"/>
    </ligand>
</feature>
<feature type="binding site" evidence="1">
    <location>
        <position position="265"/>
    </location>
    <ligand>
        <name>substrate</name>
    </ligand>
</feature>
<feature type="binding site" evidence="3">
    <location>
        <begin position="274"/>
        <end position="278"/>
    </location>
    <ligand>
        <name>ATP</name>
        <dbReference type="ChEBI" id="CHEBI:30616"/>
    </ligand>
</feature>
<feature type="binding site" evidence="3">
    <location>
        <begin position="302"/>
        <end position="307"/>
    </location>
    <ligand>
        <name>ATP</name>
        <dbReference type="ChEBI" id="CHEBI:30616"/>
    </ligand>
</feature>
<feature type="binding site" evidence="1">
    <location>
        <position position="307"/>
    </location>
    <ligand>
        <name>substrate</name>
    </ligand>
</feature>
<evidence type="ECO:0000250" key="1"/>
<evidence type="ECO:0000255" key="2">
    <source>
        <dbReference type="PROSITE-ProRule" id="PRU00842"/>
    </source>
</evidence>
<evidence type="ECO:0000255" key="3">
    <source>
        <dbReference type="PROSITE-ProRule" id="PRU00843"/>
    </source>
</evidence>